<name>ISPE_SALTI</name>
<evidence type="ECO:0000255" key="1">
    <source>
        <dbReference type="HAMAP-Rule" id="MF_00061"/>
    </source>
</evidence>
<feature type="chain" id="PRO_0000189257" description="4-diphosphocytidyl-2-C-methyl-D-erythritol kinase">
    <location>
        <begin position="1"/>
        <end position="283"/>
    </location>
</feature>
<feature type="active site" evidence="1">
    <location>
        <position position="10"/>
    </location>
</feature>
<feature type="active site" evidence="1">
    <location>
        <position position="141"/>
    </location>
</feature>
<feature type="binding site" evidence="1">
    <location>
        <begin position="99"/>
        <end position="109"/>
    </location>
    <ligand>
        <name>ATP</name>
        <dbReference type="ChEBI" id="CHEBI:30616"/>
    </ligand>
</feature>
<sequence length="283" mass="30870">MMTHWPSPAKLNLFLYITGQRADGYHTLQTLFQFLDYGDTLHIEPRHDGEIHLLTPVTGVENEDNLIVRAARLLMKVASESGRLPAGSGADISIEKRLPMGGGLGGGSSNAATVLVALNHLWQCGLSIDELATLGLTLGADVPVFVRGHAAFAEGVGEILTPVNPPEKWYLVAHPGVSIPTPVIFKDPQLPRNTPKRSIDTLLKCEFSNDCEVIARKRFREVDAALSWLLEYAPSRLTGTGACVFAEFDTESCARQVLEQAPEWLNAFVAKGVNLSPLHRELL</sequence>
<keyword id="KW-0067">ATP-binding</keyword>
<keyword id="KW-0414">Isoprene biosynthesis</keyword>
<keyword id="KW-0418">Kinase</keyword>
<keyword id="KW-0547">Nucleotide-binding</keyword>
<keyword id="KW-0808">Transferase</keyword>
<comment type="function">
    <text evidence="1">Catalyzes the phosphorylation of the position 2 hydroxy group of 4-diphosphocytidyl-2C-methyl-D-erythritol.</text>
</comment>
<comment type="catalytic activity">
    <reaction evidence="1">
        <text>4-CDP-2-C-methyl-D-erythritol + ATP = 4-CDP-2-C-methyl-D-erythritol 2-phosphate + ADP + H(+)</text>
        <dbReference type="Rhea" id="RHEA:18437"/>
        <dbReference type="ChEBI" id="CHEBI:15378"/>
        <dbReference type="ChEBI" id="CHEBI:30616"/>
        <dbReference type="ChEBI" id="CHEBI:57823"/>
        <dbReference type="ChEBI" id="CHEBI:57919"/>
        <dbReference type="ChEBI" id="CHEBI:456216"/>
        <dbReference type="EC" id="2.7.1.148"/>
    </reaction>
</comment>
<comment type="pathway">
    <text evidence="1">Isoprenoid biosynthesis; isopentenyl diphosphate biosynthesis via DXP pathway; isopentenyl diphosphate from 1-deoxy-D-xylulose 5-phosphate: step 3/6.</text>
</comment>
<comment type="subunit">
    <text evidence="1">Homodimer.</text>
</comment>
<comment type="similarity">
    <text evidence="1">Belongs to the GHMP kinase family. IspE subfamily.</text>
</comment>
<organism>
    <name type="scientific">Salmonella typhi</name>
    <dbReference type="NCBI Taxonomy" id="90370"/>
    <lineage>
        <taxon>Bacteria</taxon>
        <taxon>Pseudomonadati</taxon>
        <taxon>Pseudomonadota</taxon>
        <taxon>Gammaproteobacteria</taxon>
        <taxon>Enterobacterales</taxon>
        <taxon>Enterobacteriaceae</taxon>
        <taxon>Salmonella</taxon>
    </lineage>
</organism>
<dbReference type="EC" id="2.7.1.148" evidence="1"/>
<dbReference type="EMBL" id="AL513382">
    <property type="protein sequence ID" value="CAD02134.1"/>
    <property type="molecule type" value="Genomic_DNA"/>
</dbReference>
<dbReference type="EMBL" id="AE014613">
    <property type="protein sequence ID" value="AAO68760.1"/>
    <property type="molecule type" value="Genomic_DNA"/>
</dbReference>
<dbReference type="RefSeq" id="NP_456289.1">
    <property type="nucleotide sequence ID" value="NC_003198.1"/>
</dbReference>
<dbReference type="RefSeq" id="WP_000988253.1">
    <property type="nucleotide sequence ID" value="NZ_WSUR01000004.1"/>
</dbReference>
<dbReference type="SMR" id="Q8Z699"/>
<dbReference type="STRING" id="220341.gene:17585828"/>
<dbReference type="KEGG" id="stt:t1097"/>
<dbReference type="KEGG" id="sty:STY1905"/>
<dbReference type="PATRIC" id="fig|220341.7.peg.1919"/>
<dbReference type="eggNOG" id="COG1947">
    <property type="taxonomic scope" value="Bacteria"/>
</dbReference>
<dbReference type="HOGENOM" id="CLU_053057_3_0_6"/>
<dbReference type="OMA" id="RWPSPAK"/>
<dbReference type="OrthoDB" id="9809438at2"/>
<dbReference type="UniPathway" id="UPA00056">
    <property type="reaction ID" value="UER00094"/>
</dbReference>
<dbReference type="Proteomes" id="UP000000541">
    <property type="component" value="Chromosome"/>
</dbReference>
<dbReference type="Proteomes" id="UP000002670">
    <property type="component" value="Chromosome"/>
</dbReference>
<dbReference type="GO" id="GO:0050515">
    <property type="term" value="F:4-(cytidine 5'-diphospho)-2-C-methyl-D-erythritol kinase activity"/>
    <property type="evidence" value="ECO:0007669"/>
    <property type="project" value="UniProtKB-UniRule"/>
</dbReference>
<dbReference type="GO" id="GO:0005524">
    <property type="term" value="F:ATP binding"/>
    <property type="evidence" value="ECO:0007669"/>
    <property type="project" value="UniProtKB-UniRule"/>
</dbReference>
<dbReference type="GO" id="GO:0019288">
    <property type="term" value="P:isopentenyl diphosphate biosynthetic process, methylerythritol 4-phosphate pathway"/>
    <property type="evidence" value="ECO:0007669"/>
    <property type="project" value="UniProtKB-UniRule"/>
</dbReference>
<dbReference type="GO" id="GO:0016114">
    <property type="term" value="P:terpenoid biosynthetic process"/>
    <property type="evidence" value="ECO:0007669"/>
    <property type="project" value="InterPro"/>
</dbReference>
<dbReference type="FunFam" id="3.30.230.10:FF:000022">
    <property type="entry name" value="4-diphosphocytidyl-2-C-methyl-D-erythritol kinase"/>
    <property type="match status" value="1"/>
</dbReference>
<dbReference type="FunFam" id="3.30.70.890:FF:000004">
    <property type="entry name" value="4-diphosphocytidyl-2-C-methyl-D-erythritol kinase"/>
    <property type="match status" value="1"/>
</dbReference>
<dbReference type="Gene3D" id="3.30.230.10">
    <property type="match status" value="1"/>
</dbReference>
<dbReference type="Gene3D" id="3.30.70.890">
    <property type="entry name" value="GHMP kinase, C-terminal domain"/>
    <property type="match status" value="1"/>
</dbReference>
<dbReference type="HAMAP" id="MF_00061">
    <property type="entry name" value="IspE"/>
    <property type="match status" value="1"/>
</dbReference>
<dbReference type="InterPro" id="IPR013750">
    <property type="entry name" value="GHMP_kinase_C_dom"/>
</dbReference>
<dbReference type="InterPro" id="IPR036554">
    <property type="entry name" value="GHMP_kinase_C_sf"/>
</dbReference>
<dbReference type="InterPro" id="IPR006204">
    <property type="entry name" value="GHMP_kinase_N_dom"/>
</dbReference>
<dbReference type="InterPro" id="IPR004424">
    <property type="entry name" value="IspE"/>
</dbReference>
<dbReference type="InterPro" id="IPR020568">
    <property type="entry name" value="Ribosomal_Su5_D2-typ_SF"/>
</dbReference>
<dbReference type="InterPro" id="IPR014721">
    <property type="entry name" value="Ribsml_uS5_D2-typ_fold_subgr"/>
</dbReference>
<dbReference type="NCBIfam" id="TIGR00154">
    <property type="entry name" value="ispE"/>
    <property type="match status" value="1"/>
</dbReference>
<dbReference type="PANTHER" id="PTHR43527">
    <property type="entry name" value="4-DIPHOSPHOCYTIDYL-2-C-METHYL-D-ERYTHRITOL KINASE, CHLOROPLASTIC"/>
    <property type="match status" value="1"/>
</dbReference>
<dbReference type="PANTHER" id="PTHR43527:SF2">
    <property type="entry name" value="4-DIPHOSPHOCYTIDYL-2-C-METHYL-D-ERYTHRITOL KINASE, CHLOROPLASTIC"/>
    <property type="match status" value="1"/>
</dbReference>
<dbReference type="Pfam" id="PF08544">
    <property type="entry name" value="GHMP_kinases_C"/>
    <property type="match status" value="1"/>
</dbReference>
<dbReference type="Pfam" id="PF00288">
    <property type="entry name" value="GHMP_kinases_N"/>
    <property type="match status" value="1"/>
</dbReference>
<dbReference type="PIRSF" id="PIRSF010376">
    <property type="entry name" value="IspE"/>
    <property type="match status" value="1"/>
</dbReference>
<dbReference type="SUPFAM" id="SSF55060">
    <property type="entry name" value="GHMP Kinase, C-terminal domain"/>
    <property type="match status" value="1"/>
</dbReference>
<dbReference type="SUPFAM" id="SSF54211">
    <property type="entry name" value="Ribosomal protein S5 domain 2-like"/>
    <property type="match status" value="1"/>
</dbReference>
<gene>
    <name evidence="1" type="primary">ispE</name>
    <name type="synonym">ipk</name>
    <name type="ordered locus">STY1905</name>
    <name type="ordered locus">t1097</name>
</gene>
<protein>
    <recommendedName>
        <fullName evidence="1">4-diphosphocytidyl-2-C-methyl-D-erythritol kinase</fullName>
        <shortName evidence="1">CMK</shortName>
        <ecNumber evidence="1">2.7.1.148</ecNumber>
    </recommendedName>
    <alternativeName>
        <fullName evidence="1">4-(cytidine-5'-diphospho)-2-C-methyl-D-erythritol kinase</fullName>
    </alternativeName>
</protein>
<proteinExistence type="inferred from homology"/>
<accession>Q8Z699</accession>
<reference key="1">
    <citation type="journal article" date="2001" name="Nature">
        <title>Complete genome sequence of a multiple drug resistant Salmonella enterica serovar Typhi CT18.</title>
        <authorList>
            <person name="Parkhill J."/>
            <person name="Dougan G."/>
            <person name="James K.D."/>
            <person name="Thomson N.R."/>
            <person name="Pickard D."/>
            <person name="Wain J."/>
            <person name="Churcher C.M."/>
            <person name="Mungall K.L."/>
            <person name="Bentley S.D."/>
            <person name="Holden M.T.G."/>
            <person name="Sebaihia M."/>
            <person name="Baker S."/>
            <person name="Basham D."/>
            <person name="Brooks K."/>
            <person name="Chillingworth T."/>
            <person name="Connerton P."/>
            <person name="Cronin A."/>
            <person name="Davis P."/>
            <person name="Davies R.M."/>
            <person name="Dowd L."/>
            <person name="White N."/>
            <person name="Farrar J."/>
            <person name="Feltwell T."/>
            <person name="Hamlin N."/>
            <person name="Haque A."/>
            <person name="Hien T.T."/>
            <person name="Holroyd S."/>
            <person name="Jagels K."/>
            <person name="Krogh A."/>
            <person name="Larsen T.S."/>
            <person name="Leather S."/>
            <person name="Moule S."/>
            <person name="O'Gaora P."/>
            <person name="Parry C."/>
            <person name="Quail M.A."/>
            <person name="Rutherford K.M."/>
            <person name="Simmonds M."/>
            <person name="Skelton J."/>
            <person name="Stevens K."/>
            <person name="Whitehead S."/>
            <person name="Barrell B.G."/>
        </authorList>
    </citation>
    <scope>NUCLEOTIDE SEQUENCE [LARGE SCALE GENOMIC DNA]</scope>
    <source>
        <strain>CT18</strain>
    </source>
</reference>
<reference key="2">
    <citation type="journal article" date="2003" name="J. Bacteriol.">
        <title>Comparative genomics of Salmonella enterica serovar Typhi strains Ty2 and CT18.</title>
        <authorList>
            <person name="Deng W."/>
            <person name="Liou S.-R."/>
            <person name="Plunkett G. III"/>
            <person name="Mayhew G.F."/>
            <person name="Rose D.J."/>
            <person name="Burland V."/>
            <person name="Kodoyianni V."/>
            <person name="Schwartz D.C."/>
            <person name="Blattner F.R."/>
        </authorList>
    </citation>
    <scope>NUCLEOTIDE SEQUENCE [LARGE SCALE GENOMIC DNA]</scope>
    <source>
        <strain>ATCC 700931 / Ty2</strain>
    </source>
</reference>